<organism>
    <name type="scientific">Escherichia coli O9:H4 (strain HS)</name>
    <dbReference type="NCBI Taxonomy" id="331112"/>
    <lineage>
        <taxon>Bacteria</taxon>
        <taxon>Pseudomonadati</taxon>
        <taxon>Pseudomonadota</taxon>
        <taxon>Gammaproteobacteria</taxon>
        <taxon>Enterobacterales</taxon>
        <taxon>Enterobacteriaceae</taxon>
        <taxon>Escherichia</taxon>
    </lineage>
</organism>
<keyword id="KW-0963">Cytoplasm</keyword>
<keyword id="KW-0238">DNA-binding</keyword>
<keyword id="KW-0677">Repeat</keyword>
<keyword id="KW-0678">Repressor</keyword>
<keyword id="KW-0804">Transcription</keyword>
<keyword id="KW-0805">Transcription regulation</keyword>
<reference key="1">
    <citation type="journal article" date="2008" name="J. Bacteriol.">
        <title>The pangenome structure of Escherichia coli: comparative genomic analysis of E. coli commensal and pathogenic isolates.</title>
        <authorList>
            <person name="Rasko D.A."/>
            <person name="Rosovitz M.J."/>
            <person name="Myers G.S.A."/>
            <person name="Mongodin E.F."/>
            <person name="Fricke W.F."/>
            <person name="Gajer P."/>
            <person name="Crabtree J."/>
            <person name="Sebaihia M."/>
            <person name="Thomson N.R."/>
            <person name="Chaudhuri R."/>
            <person name="Henderson I.R."/>
            <person name="Sperandio V."/>
            <person name="Ravel J."/>
        </authorList>
    </citation>
    <scope>NUCLEOTIDE SEQUENCE [LARGE SCALE GENOMIC DNA]</scope>
    <source>
        <strain>HS</strain>
    </source>
</reference>
<sequence length="152" mass="17360">MFRGATLVNLDSKGRLSVPTRYREQLLENAAGQMVCTIDIHHPCLLLYPLPEWEIIEQKLSRLSSMNPVERRVQRLLLGHASECQMDGAGRLLIAPVLRQHAGLTKEVMLVGQFNKFELWDETTWHQQVKEDIDAEQLATGDLSERLQDLSL</sequence>
<accession>A7ZW33</accession>
<protein>
    <recommendedName>
        <fullName>Transcriptional regulator MraZ</fullName>
    </recommendedName>
</protein>
<comment type="function">
    <text evidence="1">Negatively regulates its own expression and that of the subsequent genes in the proximal part of the division and cell wall (dcw) gene cluster. Acts by binding directly to DNA. May also regulate the expression of genes outside the dcw cluster.</text>
</comment>
<comment type="subunit">
    <text evidence="1">Forms oligomers.</text>
</comment>
<comment type="subcellular location">
    <subcellularLocation>
        <location evidence="1">Cytoplasm</location>
        <location evidence="1">Nucleoid</location>
    </subcellularLocation>
</comment>
<comment type="similarity">
    <text evidence="1">Belongs to the MraZ family.</text>
</comment>
<dbReference type="EMBL" id="CP000802">
    <property type="protein sequence ID" value="ABV04487.1"/>
    <property type="molecule type" value="Genomic_DNA"/>
</dbReference>
<dbReference type="RefSeq" id="WP_001295770.1">
    <property type="nucleotide sequence ID" value="NC_009800.1"/>
</dbReference>
<dbReference type="SMR" id="A7ZW33"/>
<dbReference type="GeneID" id="75202102"/>
<dbReference type="KEGG" id="ecx:EcHS_A0087"/>
<dbReference type="HOGENOM" id="CLU_107907_2_0_6"/>
<dbReference type="GO" id="GO:0005737">
    <property type="term" value="C:cytoplasm"/>
    <property type="evidence" value="ECO:0007669"/>
    <property type="project" value="UniProtKB-UniRule"/>
</dbReference>
<dbReference type="GO" id="GO:0009295">
    <property type="term" value="C:nucleoid"/>
    <property type="evidence" value="ECO:0007669"/>
    <property type="project" value="UniProtKB-SubCell"/>
</dbReference>
<dbReference type="GO" id="GO:0003700">
    <property type="term" value="F:DNA-binding transcription factor activity"/>
    <property type="evidence" value="ECO:0007669"/>
    <property type="project" value="UniProtKB-UniRule"/>
</dbReference>
<dbReference type="GO" id="GO:0000976">
    <property type="term" value="F:transcription cis-regulatory region binding"/>
    <property type="evidence" value="ECO:0007669"/>
    <property type="project" value="TreeGrafter"/>
</dbReference>
<dbReference type="GO" id="GO:2000143">
    <property type="term" value="P:negative regulation of DNA-templated transcription initiation"/>
    <property type="evidence" value="ECO:0007669"/>
    <property type="project" value="TreeGrafter"/>
</dbReference>
<dbReference type="CDD" id="cd16321">
    <property type="entry name" value="MraZ_C"/>
    <property type="match status" value="1"/>
</dbReference>
<dbReference type="CDD" id="cd16320">
    <property type="entry name" value="MraZ_N"/>
    <property type="match status" value="1"/>
</dbReference>
<dbReference type="FunFam" id="3.40.1550.20:FF:000001">
    <property type="entry name" value="Transcriptional regulator MraZ"/>
    <property type="match status" value="1"/>
</dbReference>
<dbReference type="Gene3D" id="3.40.1550.20">
    <property type="entry name" value="Transcriptional regulator MraZ domain"/>
    <property type="match status" value="1"/>
</dbReference>
<dbReference type="HAMAP" id="MF_01008">
    <property type="entry name" value="MraZ"/>
    <property type="match status" value="1"/>
</dbReference>
<dbReference type="InterPro" id="IPR003444">
    <property type="entry name" value="MraZ"/>
</dbReference>
<dbReference type="InterPro" id="IPR035644">
    <property type="entry name" value="MraZ_C"/>
</dbReference>
<dbReference type="InterPro" id="IPR020603">
    <property type="entry name" value="MraZ_dom"/>
</dbReference>
<dbReference type="InterPro" id="IPR035642">
    <property type="entry name" value="MraZ_N"/>
</dbReference>
<dbReference type="InterPro" id="IPR038619">
    <property type="entry name" value="MraZ_sf"/>
</dbReference>
<dbReference type="InterPro" id="IPR007159">
    <property type="entry name" value="SpoVT-AbrB_dom"/>
</dbReference>
<dbReference type="InterPro" id="IPR037914">
    <property type="entry name" value="SpoVT-AbrB_sf"/>
</dbReference>
<dbReference type="NCBIfam" id="TIGR00242">
    <property type="entry name" value="division/cell wall cluster transcriptional repressor MraZ"/>
    <property type="match status" value="1"/>
</dbReference>
<dbReference type="PANTHER" id="PTHR34701">
    <property type="entry name" value="TRANSCRIPTIONAL REGULATOR MRAZ"/>
    <property type="match status" value="1"/>
</dbReference>
<dbReference type="PANTHER" id="PTHR34701:SF1">
    <property type="entry name" value="TRANSCRIPTIONAL REGULATOR MRAZ"/>
    <property type="match status" value="1"/>
</dbReference>
<dbReference type="Pfam" id="PF02381">
    <property type="entry name" value="MraZ"/>
    <property type="match status" value="2"/>
</dbReference>
<dbReference type="SUPFAM" id="SSF89447">
    <property type="entry name" value="AbrB/MazE/MraZ-like"/>
    <property type="match status" value="1"/>
</dbReference>
<dbReference type="PROSITE" id="PS51740">
    <property type="entry name" value="SPOVT_ABRB"/>
    <property type="match status" value="2"/>
</dbReference>
<proteinExistence type="inferred from homology"/>
<name>MRAZ_ECOHS</name>
<gene>
    <name evidence="1" type="primary">mraZ</name>
    <name type="ordered locus">EcHS_A0087</name>
</gene>
<evidence type="ECO:0000255" key="1">
    <source>
        <dbReference type="HAMAP-Rule" id="MF_01008"/>
    </source>
</evidence>
<evidence type="ECO:0000255" key="2">
    <source>
        <dbReference type="PROSITE-ProRule" id="PRU01076"/>
    </source>
</evidence>
<feature type="chain" id="PRO_1000062872" description="Transcriptional regulator MraZ">
    <location>
        <begin position="1"/>
        <end position="152"/>
    </location>
</feature>
<feature type="domain" description="SpoVT-AbrB 1" evidence="2">
    <location>
        <begin position="5"/>
        <end position="52"/>
    </location>
</feature>
<feature type="domain" description="SpoVT-AbrB 2" evidence="2">
    <location>
        <begin position="81"/>
        <end position="124"/>
    </location>
</feature>